<comment type="function">
    <text evidence="1">Cell wall formation. Adds enolpyruvyl to UDP-N-acetylglucosamine.</text>
</comment>
<comment type="catalytic activity">
    <reaction evidence="1">
        <text>phosphoenolpyruvate + UDP-N-acetyl-alpha-D-glucosamine = UDP-N-acetyl-3-O-(1-carboxyvinyl)-alpha-D-glucosamine + phosphate</text>
        <dbReference type="Rhea" id="RHEA:18681"/>
        <dbReference type="ChEBI" id="CHEBI:43474"/>
        <dbReference type="ChEBI" id="CHEBI:57705"/>
        <dbReference type="ChEBI" id="CHEBI:58702"/>
        <dbReference type="ChEBI" id="CHEBI:68483"/>
        <dbReference type="EC" id="2.5.1.7"/>
    </reaction>
</comment>
<comment type="pathway">
    <text evidence="1">Cell wall biogenesis; peptidoglycan biosynthesis.</text>
</comment>
<comment type="subcellular location">
    <subcellularLocation>
        <location evidence="1">Cytoplasm</location>
    </subcellularLocation>
</comment>
<comment type="similarity">
    <text evidence="1">Belongs to the EPSP synthase family. MurA subfamily.</text>
</comment>
<gene>
    <name evidence="1" type="primary">murA2</name>
    <name type="ordered locus">BA_5578</name>
    <name type="ordered locus">GBAA_5578</name>
    <name type="ordered locus">BAS5183</name>
</gene>
<proteinExistence type="inferred from homology"/>
<dbReference type="EC" id="2.5.1.7" evidence="1"/>
<dbReference type="EMBL" id="AE016879">
    <property type="protein sequence ID" value="AAP29221.1"/>
    <property type="molecule type" value="Genomic_DNA"/>
</dbReference>
<dbReference type="EMBL" id="AE017334">
    <property type="protein sequence ID" value="AAT35464.1"/>
    <property type="molecule type" value="Genomic_DNA"/>
</dbReference>
<dbReference type="EMBL" id="AE017225">
    <property type="protein sequence ID" value="AAT57472.1"/>
    <property type="molecule type" value="Genomic_DNA"/>
</dbReference>
<dbReference type="RefSeq" id="NP_847735.1">
    <property type="nucleotide sequence ID" value="NC_003997.3"/>
</dbReference>
<dbReference type="RefSeq" id="YP_031422.1">
    <property type="nucleotide sequence ID" value="NC_005945.1"/>
</dbReference>
<dbReference type="SMR" id="Q81JW5"/>
<dbReference type="STRING" id="261594.GBAA_5578"/>
<dbReference type="DNASU" id="1085274"/>
<dbReference type="KEGG" id="ban:BA_5578"/>
<dbReference type="KEGG" id="bar:GBAA_5578"/>
<dbReference type="KEGG" id="bat:BAS5183"/>
<dbReference type="PATRIC" id="fig|198094.11.peg.5536"/>
<dbReference type="eggNOG" id="COG0766">
    <property type="taxonomic scope" value="Bacteria"/>
</dbReference>
<dbReference type="HOGENOM" id="CLU_027387_0_0_9"/>
<dbReference type="OMA" id="RFGQRNF"/>
<dbReference type="OrthoDB" id="9803760at2"/>
<dbReference type="UniPathway" id="UPA00219"/>
<dbReference type="Proteomes" id="UP000000427">
    <property type="component" value="Chromosome"/>
</dbReference>
<dbReference type="Proteomes" id="UP000000594">
    <property type="component" value="Chromosome"/>
</dbReference>
<dbReference type="GO" id="GO:0005737">
    <property type="term" value="C:cytoplasm"/>
    <property type="evidence" value="ECO:0007669"/>
    <property type="project" value="UniProtKB-SubCell"/>
</dbReference>
<dbReference type="GO" id="GO:0008760">
    <property type="term" value="F:UDP-N-acetylglucosamine 1-carboxyvinyltransferase activity"/>
    <property type="evidence" value="ECO:0007669"/>
    <property type="project" value="UniProtKB-UniRule"/>
</dbReference>
<dbReference type="GO" id="GO:0051301">
    <property type="term" value="P:cell division"/>
    <property type="evidence" value="ECO:0007669"/>
    <property type="project" value="UniProtKB-KW"/>
</dbReference>
<dbReference type="GO" id="GO:0071555">
    <property type="term" value="P:cell wall organization"/>
    <property type="evidence" value="ECO:0007669"/>
    <property type="project" value="UniProtKB-KW"/>
</dbReference>
<dbReference type="GO" id="GO:0009252">
    <property type="term" value="P:peptidoglycan biosynthetic process"/>
    <property type="evidence" value="ECO:0007669"/>
    <property type="project" value="UniProtKB-UniRule"/>
</dbReference>
<dbReference type="GO" id="GO:0008360">
    <property type="term" value="P:regulation of cell shape"/>
    <property type="evidence" value="ECO:0007669"/>
    <property type="project" value="UniProtKB-KW"/>
</dbReference>
<dbReference type="GO" id="GO:0019277">
    <property type="term" value="P:UDP-N-acetylgalactosamine biosynthetic process"/>
    <property type="evidence" value="ECO:0007669"/>
    <property type="project" value="InterPro"/>
</dbReference>
<dbReference type="CDD" id="cd01555">
    <property type="entry name" value="UdpNAET"/>
    <property type="match status" value="1"/>
</dbReference>
<dbReference type="FunFam" id="3.65.10.10:FF:000001">
    <property type="entry name" value="UDP-N-acetylglucosamine 1-carboxyvinyltransferase"/>
    <property type="match status" value="1"/>
</dbReference>
<dbReference type="Gene3D" id="3.65.10.10">
    <property type="entry name" value="Enolpyruvate transferase domain"/>
    <property type="match status" value="2"/>
</dbReference>
<dbReference type="HAMAP" id="MF_00111">
    <property type="entry name" value="MurA"/>
    <property type="match status" value="1"/>
</dbReference>
<dbReference type="InterPro" id="IPR001986">
    <property type="entry name" value="Enolpyruvate_Tfrase_dom"/>
</dbReference>
<dbReference type="InterPro" id="IPR036968">
    <property type="entry name" value="Enolpyruvate_Tfrase_sf"/>
</dbReference>
<dbReference type="InterPro" id="IPR050068">
    <property type="entry name" value="MurA_subfamily"/>
</dbReference>
<dbReference type="InterPro" id="IPR013792">
    <property type="entry name" value="RNA3'P_cycl/enolpyr_Trfase_a/b"/>
</dbReference>
<dbReference type="InterPro" id="IPR005750">
    <property type="entry name" value="UDP_GlcNAc_COvinyl_MurA"/>
</dbReference>
<dbReference type="NCBIfam" id="TIGR01072">
    <property type="entry name" value="murA"/>
    <property type="match status" value="1"/>
</dbReference>
<dbReference type="NCBIfam" id="NF006873">
    <property type="entry name" value="PRK09369.1"/>
    <property type="match status" value="1"/>
</dbReference>
<dbReference type="NCBIfam" id="NF009470">
    <property type="entry name" value="PRK12830.1"/>
    <property type="match status" value="1"/>
</dbReference>
<dbReference type="PANTHER" id="PTHR43783">
    <property type="entry name" value="UDP-N-ACETYLGLUCOSAMINE 1-CARBOXYVINYLTRANSFERASE"/>
    <property type="match status" value="1"/>
</dbReference>
<dbReference type="PANTHER" id="PTHR43783:SF2">
    <property type="entry name" value="UDP-N-ACETYLGLUCOSAMINE 1-CARBOXYVINYLTRANSFERASE 2"/>
    <property type="match status" value="1"/>
</dbReference>
<dbReference type="Pfam" id="PF00275">
    <property type="entry name" value="EPSP_synthase"/>
    <property type="match status" value="1"/>
</dbReference>
<dbReference type="SUPFAM" id="SSF55205">
    <property type="entry name" value="EPT/RTPC-like"/>
    <property type="match status" value="1"/>
</dbReference>
<feature type="chain" id="PRO_0000231152" description="UDP-N-acetylglucosamine 1-carboxyvinyltransferase 2">
    <location>
        <begin position="1"/>
        <end position="429"/>
    </location>
</feature>
<feature type="active site" description="Proton donor" evidence="1">
    <location>
        <position position="117"/>
    </location>
</feature>
<feature type="binding site" evidence="1">
    <location>
        <begin position="22"/>
        <end position="23"/>
    </location>
    <ligand>
        <name>phosphoenolpyruvate</name>
        <dbReference type="ChEBI" id="CHEBI:58702"/>
    </ligand>
</feature>
<feature type="binding site" evidence="1">
    <location>
        <position position="93"/>
    </location>
    <ligand>
        <name>UDP-N-acetyl-alpha-D-glucosamine</name>
        <dbReference type="ChEBI" id="CHEBI:57705"/>
    </ligand>
</feature>
<feature type="binding site" evidence="1">
    <location>
        <begin position="122"/>
        <end position="126"/>
    </location>
    <ligand>
        <name>UDP-N-acetyl-alpha-D-glucosamine</name>
        <dbReference type="ChEBI" id="CHEBI:57705"/>
    </ligand>
</feature>
<feature type="binding site" evidence="1">
    <location>
        <position position="305"/>
    </location>
    <ligand>
        <name>UDP-N-acetyl-alpha-D-glucosamine</name>
        <dbReference type="ChEBI" id="CHEBI:57705"/>
    </ligand>
</feature>
<feature type="binding site" evidence="1">
    <location>
        <position position="327"/>
    </location>
    <ligand>
        <name>UDP-N-acetyl-alpha-D-glucosamine</name>
        <dbReference type="ChEBI" id="CHEBI:57705"/>
    </ligand>
</feature>
<feature type="modified residue" description="2-(S-cysteinyl)pyruvic acid O-phosphothioketal" evidence="1">
    <location>
        <position position="117"/>
    </location>
</feature>
<keyword id="KW-0131">Cell cycle</keyword>
<keyword id="KW-0132">Cell division</keyword>
<keyword id="KW-0133">Cell shape</keyword>
<keyword id="KW-0961">Cell wall biogenesis/degradation</keyword>
<keyword id="KW-0963">Cytoplasm</keyword>
<keyword id="KW-0573">Peptidoglycan synthesis</keyword>
<keyword id="KW-0670">Pyruvate</keyword>
<keyword id="KW-1185">Reference proteome</keyword>
<keyword id="KW-0808">Transferase</keyword>
<organism>
    <name type="scientific">Bacillus anthracis</name>
    <dbReference type="NCBI Taxonomy" id="1392"/>
    <lineage>
        <taxon>Bacteria</taxon>
        <taxon>Bacillati</taxon>
        <taxon>Bacillota</taxon>
        <taxon>Bacilli</taxon>
        <taxon>Bacillales</taxon>
        <taxon>Bacillaceae</taxon>
        <taxon>Bacillus</taxon>
        <taxon>Bacillus cereus group</taxon>
    </lineage>
</organism>
<evidence type="ECO:0000255" key="1">
    <source>
        <dbReference type="HAMAP-Rule" id="MF_00111"/>
    </source>
</evidence>
<accession>Q81JW5</accession>
<accession>Q6HQG6</accession>
<accession>Q6KIV7</accession>
<protein>
    <recommendedName>
        <fullName evidence="1">UDP-N-acetylglucosamine 1-carboxyvinyltransferase 2</fullName>
        <ecNumber evidence="1">2.5.1.7</ecNumber>
    </recommendedName>
    <alternativeName>
        <fullName evidence="1">Enoylpyruvate transferase 2</fullName>
    </alternativeName>
    <alternativeName>
        <fullName evidence="1">UDP-N-acetylglucosamine enolpyruvyl transferase 2</fullName>
        <shortName evidence="1">EPT 2</shortName>
    </alternativeName>
</protein>
<sequence length="429" mass="45866">MEKLLIEGGRALNGTIRVSGAKNSAVALIPATILADTPVTIGGVPNISDVKMLGDLLEEIGGRVTYGQEEEMVVDPSNMVAMPLPNGKVKKLRASYYLMGAMLGRFKKAVIGLPGGCHLGPRPIDQHIKGFEALGAHVTNEQGAIYLRADELRGARIYLDVVSVGATINIMLAAVRAKGRTVIENAAKEPEIIDVATLLTSMGARIKGAGTDVIRIDGVDSLHGCHHTIIPDRIEAGTYMILGAASGGEVTVDNVIPQHLESVTAKLREAGVQVETNDDQITVNGDRRLKVVDIKTLVYPGFPTDLQQPFTTLLTKAHGTGVVTDTIYGARFKHIDELRRMNAQIKVEGRSAIVTGPVLLQGAKVKASDLRAGAALVIAGLMADGITEVTGLEHIDRGYENIVDKLKGLGANIWREQMTKQEIEEMKNA</sequence>
<reference key="1">
    <citation type="journal article" date="2003" name="Nature">
        <title>The genome sequence of Bacillus anthracis Ames and comparison to closely related bacteria.</title>
        <authorList>
            <person name="Read T.D."/>
            <person name="Peterson S.N."/>
            <person name="Tourasse N.J."/>
            <person name="Baillie L.W."/>
            <person name="Paulsen I.T."/>
            <person name="Nelson K.E."/>
            <person name="Tettelin H."/>
            <person name="Fouts D.E."/>
            <person name="Eisen J.A."/>
            <person name="Gill S.R."/>
            <person name="Holtzapple E.K."/>
            <person name="Okstad O.A."/>
            <person name="Helgason E."/>
            <person name="Rilstone J."/>
            <person name="Wu M."/>
            <person name="Kolonay J.F."/>
            <person name="Beanan M.J."/>
            <person name="Dodson R.J."/>
            <person name="Brinkac L.M."/>
            <person name="Gwinn M.L."/>
            <person name="DeBoy R.T."/>
            <person name="Madpu R."/>
            <person name="Daugherty S.C."/>
            <person name="Durkin A.S."/>
            <person name="Haft D.H."/>
            <person name="Nelson W.C."/>
            <person name="Peterson J.D."/>
            <person name="Pop M."/>
            <person name="Khouri H.M."/>
            <person name="Radune D."/>
            <person name="Benton J.L."/>
            <person name="Mahamoud Y."/>
            <person name="Jiang L."/>
            <person name="Hance I.R."/>
            <person name="Weidman J.F."/>
            <person name="Berry K.J."/>
            <person name="Plaut R.D."/>
            <person name="Wolf A.M."/>
            <person name="Watkins K.L."/>
            <person name="Nierman W.C."/>
            <person name="Hazen A."/>
            <person name="Cline R.T."/>
            <person name="Redmond C."/>
            <person name="Thwaite J.E."/>
            <person name="White O."/>
            <person name="Salzberg S.L."/>
            <person name="Thomason B."/>
            <person name="Friedlander A.M."/>
            <person name="Koehler T.M."/>
            <person name="Hanna P.C."/>
            <person name="Kolstoe A.-B."/>
            <person name="Fraser C.M."/>
        </authorList>
    </citation>
    <scope>NUCLEOTIDE SEQUENCE [LARGE SCALE GENOMIC DNA]</scope>
    <source>
        <strain>Ames / isolate Porton</strain>
    </source>
</reference>
<reference key="2">
    <citation type="journal article" date="2009" name="J. Bacteriol.">
        <title>The complete genome sequence of Bacillus anthracis Ames 'Ancestor'.</title>
        <authorList>
            <person name="Ravel J."/>
            <person name="Jiang L."/>
            <person name="Stanley S.T."/>
            <person name="Wilson M.R."/>
            <person name="Decker R.S."/>
            <person name="Read T.D."/>
            <person name="Worsham P."/>
            <person name="Keim P.S."/>
            <person name="Salzberg S.L."/>
            <person name="Fraser-Liggett C.M."/>
            <person name="Rasko D.A."/>
        </authorList>
    </citation>
    <scope>NUCLEOTIDE SEQUENCE [LARGE SCALE GENOMIC DNA]</scope>
    <source>
        <strain>Ames ancestor</strain>
    </source>
</reference>
<reference key="3">
    <citation type="submission" date="2004-01" db="EMBL/GenBank/DDBJ databases">
        <title>Complete genome sequence of Bacillus anthracis Sterne.</title>
        <authorList>
            <person name="Brettin T.S."/>
            <person name="Bruce D."/>
            <person name="Challacombe J.F."/>
            <person name="Gilna P."/>
            <person name="Han C."/>
            <person name="Hill K."/>
            <person name="Hitchcock P."/>
            <person name="Jackson P."/>
            <person name="Keim P."/>
            <person name="Longmire J."/>
            <person name="Lucas S."/>
            <person name="Okinaka R."/>
            <person name="Richardson P."/>
            <person name="Rubin E."/>
            <person name="Tice H."/>
        </authorList>
    </citation>
    <scope>NUCLEOTIDE SEQUENCE [LARGE SCALE GENOMIC DNA]</scope>
    <source>
        <strain>Sterne</strain>
    </source>
</reference>
<name>MURA2_BACAN</name>